<reference key="1">
    <citation type="journal article" date="2007" name="PLoS Genet.">
        <title>Patterns and implications of gene gain and loss in the evolution of Prochlorococcus.</title>
        <authorList>
            <person name="Kettler G.C."/>
            <person name="Martiny A.C."/>
            <person name="Huang K."/>
            <person name="Zucker J."/>
            <person name="Coleman M.L."/>
            <person name="Rodrigue S."/>
            <person name="Chen F."/>
            <person name="Lapidus A."/>
            <person name="Ferriera S."/>
            <person name="Johnson J."/>
            <person name="Steglich C."/>
            <person name="Church G.M."/>
            <person name="Richardson P."/>
            <person name="Chisholm S.W."/>
        </authorList>
    </citation>
    <scope>NUCLEOTIDE SEQUENCE [LARGE SCALE GENOMIC DNA]</scope>
    <source>
        <strain>MIT 9303</strain>
    </source>
</reference>
<accession>A2CCJ9</accession>
<organism>
    <name type="scientific">Prochlorococcus marinus (strain MIT 9303)</name>
    <dbReference type="NCBI Taxonomy" id="59922"/>
    <lineage>
        <taxon>Bacteria</taxon>
        <taxon>Bacillati</taxon>
        <taxon>Cyanobacteriota</taxon>
        <taxon>Cyanophyceae</taxon>
        <taxon>Synechococcales</taxon>
        <taxon>Prochlorococcaceae</taxon>
        <taxon>Prochlorococcus</taxon>
    </lineage>
</organism>
<feature type="chain" id="PRO_0000340148" description="Sugar fermentation stimulation protein homolog">
    <location>
        <begin position="1"/>
        <end position="259"/>
    </location>
</feature>
<evidence type="ECO:0000255" key="1">
    <source>
        <dbReference type="HAMAP-Rule" id="MF_00095"/>
    </source>
</evidence>
<proteinExistence type="inferred from homology"/>
<sequence length="259" mass="28356">MTEAIPKGSLGSPLLTFPPLEEGVLVKRYKRFLADVELVSGEIVTAHCANTGPMTGVLHPGGRVRLRHAPSPKRKLAWTWEQAEAPSSQGGLCWVGINTALANSLIRAAIEAGHLKQVLGPIAAIRPEVTYGSNRRSRIDLLLTPDANCSDTRPIYLEVKNTTWNEHSLALFPDTVTERGQKHLKELIGVLPESRAVLVPCLSRHDVQTFAPGDSADPRYGELFRLALTAGVEVIPCCFGFHRDKITWEGLRPTKTTQS</sequence>
<protein>
    <recommendedName>
        <fullName evidence="1">Sugar fermentation stimulation protein homolog</fullName>
    </recommendedName>
</protein>
<dbReference type="EMBL" id="CP000554">
    <property type="protein sequence ID" value="ABM79209.1"/>
    <property type="molecule type" value="Genomic_DNA"/>
</dbReference>
<dbReference type="RefSeq" id="WP_011827058.1">
    <property type="nucleotide sequence ID" value="NC_008820.1"/>
</dbReference>
<dbReference type="SMR" id="A2CCJ9"/>
<dbReference type="KEGG" id="pmf:P9303_24781"/>
<dbReference type="HOGENOM" id="CLU_052299_2_0_3"/>
<dbReference type="BioCyc" id="PMAR59922:G1G80-2169-MONOMER"/>
<dbReference type="Proteomes" id="UP000002274">
    <property type="component" value="Chromosome"/>
</dbReference>
<dbReference type="GO" id="GO:0003677">
    <property type="term" value="F:DNA binding"/>
    <property type="evidence" value="ECO:0007669"/>
    <property type="project" value="InterPro"/>
</dbReference>
<dbReference type="CDD" id="cd22359">
    <property type="entry name" value="SfsA-like_bacterial"/>
    <property type="match status" value="1"/>
</dbReference>
<dbReference type="Gene3D" id="2.40.50.580">
    <property type="match status" value="1"/>
</dbReference>
<dbReference type="Gene3D" id="3.40.1350.60">
    <property type="match status" value="1"/>
</dbReference>
<dbReference type="HAMAP" id="MF_00095">
    <property type="entry name" value="SfsA"/>
    <property type="match status" value="1"/>
</dbReference>
<dbReference type="InterPro" id="IPR005224">
    <property type="entry name" value="SfsA"/>
</dbReference>
<dbReference type="InterPro" id="IPR040452">
    <property type="entry name" value="SfsA_C"/>
</dbReference>
<dbReference type="InterPro" id="IPR041465">
    <property type="entry name" value="SfsA_N"/>
</dbReference>
<dbReference type="NCBIfam" id="TIGR00230">
    <property type="entry name" value="sfsA"/>
    <property type="match status" value="1"/>
</dbReference>
<dbReference type="PANTHER" id="PTHR30545">
    <property type="entry name" value="SUGAR FERMENTATION STIMULATION PROTEIN A"/>
    <property type="match status" value="1"/>
</dbReference>
<dbReference type="PANTHER" id="PTHR30545:SF2">
    <property type="entry name" value="SUGAR FERMENTATION STIMULATION PROTEIN A"/>
    <property type="match status" value="1"/>
</dbReference>
<dbReference type="Pfam" id="PF03749">
    <property type="entry name" value="SfsA"/>
    <property type="match status" value="1"/>
</dbReference>
<dbReference type="Pfam" id="PF17746">
    <property type="entry name" value="SfsA_N"/>
    <property type="match status" value="1"/>
</dbReference>
<gene>
    <name evidence="1" type="primary">sfsA</name>
    <name type="ordered locus">P9303_24781</name>
</gene>
<comment type="similarity">
    <text evidence="1">Belongs to the SfsA family.</text>
</comment>
<name>SFSA_PROM3</name>